<feature type="chain" id="PRO_0000196944" description="2,3,4,5-tetrahydropyridine-2,6-dicarboxylate N-succinyltransferase">
    <location>
        <begin position="1"/>
        <end position="276"/>
    </location>
</feature>
<feature type="binding site" evidence="1">
    <location>
        <position position="104"/>
    </location>
    <ligand>
        <name>substrate</name>
    </ligand>
</feature>
<feature type="binding site" evidence="1">
    <location>
        <position position="141"/>
    </location>
    <ligand>
        <name>substrate</name>
    </ligand>
</feature>
<comment type="catalytic activity">
    <reaction evidence="1">
        <text>(S)-2,3,4,5-tetrahydrodipicolinate + succinyl-CoA + H2O = (S)-2-succinylamino-6-oxoheptanedioate + CoA</text>
        <dbReference type="Rhea" id="RHEA:17325"/>
        <dbReference type="ChEBI" id="CHEBI:15377"/>
        <dbReference type="ChEBI" id="CHEBI:15685"/>
        <dbReference type="ChEBI" id="CHEBI:16845"/>
        <dbReference type="ChEBI" id="CHEBI:57287"/>
        <dbReference type="ChEBI" id="CHEBI:57292"/>
        <dbReference type="EC" id="2.3.1.117"/>
    </reaction>
</comment>
<comment type="pathway">
    <text evidence="1">Amino-acid biosynthesis; L-lysine biosynthesis via DAP pathway; LL-2,6-diaminopimelate from (S)-tetrahydrodipicolinate (succinylase route): step 1/3.</text>
</comment>
<comment type="subunit">
    <text evidence="1">Homotrimer.</text>
</comment>
<comment type="subcellular location">
    <subcellularLocation>
        <location evidence="1">Cytoplasm</location>
    </subcellularLocation>
</comment>
<comment type="similarity">
    <text evidence="1">Belongs to the transferase hexapeptide repeat family.</text>
</comment>
<accession>Q5X6L6</accession>
<dbReference type="EC" id="2.3.1.117" evidence="1"/>
<dbReference type="EMBL" id="CR628336">
    <property type="protein sequence ID" value="CAH12100.1"/>
    <property type="molecule type" value="Genomic_DNA"/>
</dbReference>
<dbReference type="RefSeq" id="WP_010946623.1">
    <property type="nucleotide sequence ID" value="NC_006368.1"/>
</dbReference>
<dbReference type="SMR" id="Q5X6L6"/>
<dbReference type="GeneID" id="57034876"/>
<dbReference type="KEGG" id="lpp:lpp0949"/>
<dbReference type="LegioList" id="lpp0949"/>
<dbReference type="HOGENOM" id="CLU_050859_0_1_6"/>
<dbReference type="UniPathway" id="UPA00034">
    <property type="reaction ID" value="UER00019"/>
</dbReference>
<dbReference type="GO" id="GO:0005737">
    <property type="term" value="C:cytoplasm"/>
    <property type="evidence" value="ECO:0007669"/>
    <property type="project" value="UniProtKB-SubCell"/>
</dbReference>
<dbReference type="GO" id="GO:0008666">
    <property type="term" value="F:2,3,4,5-tetrahydropyridine-2,6-dicarboxylate N-succinyltransferase activity"/>
    <property type="evidence" value="ECO:0007669"/>
    <property type="project" value="UniProtKB-UniRule"/>
</dbReference>
<dbReference type="GO" id="GO:0016779">
    <property type="term" value="F:nucleotidyltransferase activity"/>
    <property type="evidence" value="ECO:0007669"/>
    <property type="project" value="TreeGrafter"/>
</dbReference>
<dbReference type="GO" id="GO:0019877">
    <property type="term" value="P:diaminopimelate biosynthetic process"/>
    <property type="evidence" value="ECO:0007669"/>
    <property type="project" value="UniProtKB-UniRule"/>
</dbReference>
<dbReference type="GO" id="GO:0009089">
    <property type="term" value="P:lysine biosynthetic process via diaminopimelate"/>
    <property type="evidence" value="ECO:0007669"/>
    <property type="project" value="UniProtKB-UniRule"/>
</dbReference>
<dbReference type="CDD" id="cd03350">
    <property type="entry name" value="LbH_THP_succinylT"/>
    <property type="match status" value="1"/>
</dbReference>
<dbReference type="Gene3D" id="2.160.10.10">
    <property type="entry name" value="Hexapeptide repeat proteins"/>
    <property type="match status" value="1"/>
</dbReference>
<dbReference type="Gene3D" id="1.10.166.10">
    <property type="entry name" value="Tetrahydrodipicolinate-N-succinyltransferase, N-terminal domain"/>
    <property type="match status" value="1"/>
</dbReference>
<dbReference type="HAMAP" id="MF_00811">
    <property type="entry name" value="DapD"/>
    <property type="match status" value="1"/>
</dbReference>
<dbReference type="InterPro" id="IPR005664">
    <property type="entry name" value="DapD_Trfase_Hexpep_rpt_fam"/>
</dbReference>
<dbReference type="InterPro" id="IPR001451">
    <property type="entry name" value="Hexapep"/>
</dbReference>
<dbReference type="InterPro" id="IPR023180">
    <property type="entry name" value="THP_succinylTrfase_dom1"/>
</dbReference>
<dbReference type="InterPro" id="IPR037133">
    <property type="entry name" value="THP_succinylTrfase_N_sf"/>
</dbReference>
<dbReference type="InterPro" id="IPR011004">
    <property type="entry name" value="Trimer_LpxA-like_sf"/>
</dbReference>
<dbReference type="NCBIfam" id="TIGR00965">
    <property type="entry name" value="dapD"/>
    <property type="match status" value="1"/>
</dbReference>
<dbReference type="NCBIfam" id="NF008808">
    <property type="entry name" value="PRK11830.1"/>
    <property type="match status" value="1"/>
</dbReference>
<dbReference type="PANTHER" id="PTHR19136:SF52">
    <property type="entry name" value="2,3,4,5-TETRAHYDROPYRIDINE-2,6-DICARBOXYLATE N-SUCCINYLTRANSFERASE"/>
    <property type="match status" value="1"/>
</dbReference>
<dbReference type="PANTHER" id="PTHR19136">
    <property type="entry name" value="MOLYBDENUM COFACTOR GUANYLYLTRANSFERASE"/>
    <property type="match status" value="1"/>
</dbReference>
<dbReference type="Pfam" id="PF14602">
    <property type="entry name" value="Hexapep_2"/>
    <property type="match status" value="1"/>
</dbReference>
<dbReference type="Pfam" id="PF14805">
    <property type="entry name" value="THDPS_N_2"/>
    <property type="match status" value="1"/>
</dbReference>
<dbReference type="SUPFAM" id="SSF51161">
    <property type="entry name" value="Trimeric LpxA-like enzymes"/>
    <property type="match status" value="1"/>
</dbReference>
<keyword id="KW-0012">Acyltransferase</keyword>
<keyword id="KW-0028">Amino-acid biosynthesis</keyword>
<keyword id="KW-0963">Cytoplasm</keyword>
<keyword id="KW-0220">Diaminopimelate biosynthesis</keyword>
<keyword id="KW-0457">Lysine biosynthesis</keyword>
<keyword id="KW-0677">Repeat</keyword>
<keyword id="KW-0808">Transferase</keyword>
<reference key="1">
    <citation type="journal article" date="2004" name="Nat. Genet.">
        <title>Evidence in the Legionella pneumophila genome for exploitation of host cell functions and high genome plasticity.</title>
        <authorList>
            <person name="Cazalet C."/>
            <person name="Rusniok C."/>
            <person name="Brueggemann H."/>
            <person name="Zidane N."/>
            <person name="Magnier A."/>
            <person name="Ma L."/>
            <person name="Tichit M."/>
            <person name="Jarraud S."/>
            <person name="Bouchier C."/>
            <person name="Vandenesch F."/>
            <person name="Kunst F."/>
            <person name="Etienne J."/>
            <person name="Glaser P."/>
            <person name="Buchrieser C."/>
        </authorList>
    </citation>
    <scope>NUCLEOTIDE SEQUENCE [LARGE SCALE GENOMIC DNA]</scope>
    <source>
        <strain>Paris</strain>
    </source>
</reference>
<evidence type="ECO:0000255" key="1">
    <source>
        <dbReference type="HAMAP-Rule" id="MF_00811"/>
    </source>
</evidence>
<organism>
    <name type="scientific">Legionella pneumophila (strain Paris)</name>
    <dbReference type="NCBI Taxonomy" id="297246"/>
    <lineage>
        <taxon>Bacteria</taxon>
        <taxon>Pseudomonadati</taxon>
        <taxon>Pseudomonadota</taxon>
        <taxon>Gammaproteobacteria</taxon>
        <taxon>Legionellales</taxon>
        <taxon>Legionellaceae</taxon>
        <taxon>Legionella</taxon>
    </lineage>
</organism>
<gene>
    <name evidence="1" type="primary">dapD</name>
    <name type="ordered locus">lpp0949</name>
</gene>
<sequence>MNSLQDLIEQAFENRQNLSLDTASSDLINAINEVLSGLDNGQFRVAEKINGEWTVHQWLKKAVLLSFKLFPNQIIDAGFCKFYDKIPLKYTDCSNEQFQQSGVRVVPHAMVRRGAYIAKNTVLMPSYVNIGAYIDEGVMVDTWATVGSCAQIGKNVHISGGAGIGGVLEPLQANPTIIEDNCFIGARSEIVEGVIVEKNSVISMGVFLGQSTKIYNRITGEVSYGRIPAGSVVVAGNLPSHDGSHSLYCAVIVKQVDEKTRAKVSINDLLRANQDD</sequence>
<name>DAPD_LEGPA</name>
<protein>
    <recommendedName>
        <fullName evidence="1">2,3,4,5-tetrahydropyridine-2,6-dicarboxylate N-succinyltransferase</fullName>
        <ecNumber evidence="1">2.3.1.117</ecNumber>
    </recommendedName>
    <alternativeName>
        <fullName evidence="1">Tetrahydrodipicolinate N-succinyltransferase</fullName>
        <shortName evidence="1">THDP succinyltransferase</shortName>
        <shortName evidence="1">THP succinyltransferase</shortName>
        <shortName evidence="1">Tetrahydropicolinate succinylase</shortName>
    </alternativeName>
</protein>
<proteinExistence type="inferred from homology"/>